<protein>
    <recommendedName>
        <fullName evidence="1">Protein RecA</fullName>
    </recommendedName>
    <alternativeName>
        <fullName evidence="1">Recombinase A</fullName>
    </alternativeName>
</protein>
<gene>
    <name evidence="1" type="primary">recA</name>
    <name type="ordered locus">P9515_17441</name>
</gene>
<keyword id="KW-0067">ATP-binding</keyword>
<keyword id="KW-0963">Cytoplasm</keyword>
<keyword id="KW-0227">DNA damage</keyword>
<keyword id="KW-0233">DNA recombination</keyword>
<keyword id="KW-0234">DNA repair</keyword>
<keyword id="KW-0238">DNA-binding</keyword>
<keyword id="KW-0547">Nucleotide-binding</keyword>
<keyword id="KW-0742">SOS response</keyword>
<reference key="1">
    <citation type="journal article" date="2007" name="PLoS Genet.">
        <title>Patterns and implications of gene gain and loss in the evolution of Prochlorococcus.</title>
        <authorList>
            <person name="Kettler G.C."/>
            <person name="Martiny A.C."/>
            <person name="Huang K."/>
            <person name="Zucker J."/>
            <person name="Coleman M.L."/>
            <person name="Rodrigue S."/>
            <person name="Chen F."/>
            <person name="Lapidus A."/>
            <person name="Ferriera S."/>
            <person name="Johnson J."/>
            <person name="Steglich C."/>
            <person name="Church G.M."/>
            <person name="Richardson P."/>
            <person name="Chisholm S.W."/>
        </authorList>
    </citation>
    <scope>NUCLEOTIDE SEQUENCE [LARGE SCALE GENOMIC DNA]</scope>
    <source>
        <strain>MIT 9515</strain>
    </source>
</reference>
<comment type="function">
    <text evidence="1">Can catalyze the hydrolysis of ATP in the presence of single-stranded DNA, the ATP-dependent uptake of single-stranded DNA by duplex DNA, and the ATP-dependent hybridization of homologous single-stranded DNAs. It interacts with LexA causing its activation and leading to its autocatalytic cleavage.</text>
</comment>
<comment type="subcellular location">
    <subcellularLocation>
        <location evidence="1">Cytoplasm</location>
    </subcellularLocation>
</comment>
<comment type="similarity">
    <text evidence="1">Belongs to the RecA family.</text>
</comment>
<evidence type="ECO:0000255" key="1">
    <source>
        <dbReference type="HAMAP-Rule" id="MF_00268"/>
    </source>
</evidence>
<evidence type="ECO:0000256" key="2">
    <source>
        <dbReference type="SAM" id="MobiDB-lite"/>
    </source>
</evidence>
<accession>A2BYU0</accession>
<proteinExistence type="inferred from homology"/>
<dbReference type="EMBL" id="CP000552">
    <property type="protein sequence ID" value="ABM72951.1"/>
    <property type="molecule type" value="Genomic_DNA"/>
</dbReference>
<dbReference type="RefSeq" id="WP_011821041.1">
    <property type="nucleotide sequence ID" value="NC_008817.1"/>
</dbReference>
<dbReference type="SMR" id="A2BYU0"/>
<dbReference type="STRING" id="167542.P9515_17441"/>
<dbReference type="GeneID" id="60201509"/>
<dbReference type="KEGG" id="pmc:P9515_17441"/>
<dbReference type="eggNOG" id="COG0468">
    <property type="taxonomic scope" value="Bacteria"/>
</dbReference>
<dbReference type="HOGENOM" id="CLU_040469_3_2_3"/>
<dbReference type="OrthoDB" id="9776733at2"/>
<dbReference type="Proteomes" id="UP000001589">
    <property type="component" value="Chromosome"/>
</dbReference>
<dbReference type="GO" id="GO:0005829">
    <property type="term" value="C:cytosol"/>
    <property type="evidence" value="ECO:0007669"/>
    <property type="project" value="TreeGrafter"/>
</dbReference>
<dbReference type="GO" id="GO:0005524">
    <property type="term" value="F:ATP binding"/>
    <property type="evidence" value="ECO:0007669"/>
    <property type="project" value="UniProtKB-UniRule"/>
</dbReference>
<dbReference type="GO" id="GO:0016887">
    <property type="term" value="F:ATP hydrolysis activity"/>
    <property type="evidence" value="ECO:0007669"/>
    <property type="project" value="InterPro"/>
</dbReference>
<dbReference type="GO" id="GO:0140664">
    <property type="term" value="F:ATP-dependent DNA damage sensor activity"/>
    <property type="evidence" value="ECO:0007669"/>
    <property type="project" value="InterPro"/>
</dbReference>
<dbReference type="GO" id="GO:0003684">
    <property type="term" value="F:damaged DNA binding"/>
    <property type="evidence" value="ECO:0007669"/>
    <property type="project" value="UniProtKB-UniRule"/>
</dbReference>
<dbReference type="GO" id="GO:0003697">
    <property type="term" value="F:single-stranded DNA binding"/>
    <property type="evidence" value="ECO:0007669"/>
    <property type="project" value="UniProtKB-UniRule"/>
</dbReference>
<dbReference type="GO" id="GO:0006310">
    <property type="term" value="P:DNA recombination"/>
    <property type="evidence" value="ECO:0007669"/>
    <property type="project" value="UniProtKB-UniRule"/>
</dbReference>
<dbReference type="GO" id="GO:0006281">
    <property type="term" value="P:DNA repair"/>
    <property type="evidence" value="ECO:0007669"/>
    <property type="project" value="UniProtKB-UniRule"/>
</dbReference>
<dbReference type="GO" id="GO:0009432">
    <property type="term" value="P:SOS response"/>
    <property type="evidence" value="ECO:0007669"/>
    <property type="project" value="UniProtKB-UniRule"/>
</dbReference>
<dbReference type="CDD" id="cd00983">
    <property type="entry name" value="RecA"/>
    <property type="match status" value="1"/>
</dbReference>
<dbReference type="FunFam" id="3.40.50.300:FF:000087">
    <property type="entry name" value="Recombinase RecA"/>
    <property type="match status" value="1"/>
</dbReference>
<dbReference type="Gene3D" id="3.40.50.300">
    <property type="entry name" value="P-loop containing nucleotide triphosphate hydrolases"/>
    <property type="match status" value="1"/>
</dbReference>
<dbReference type="HAMAP" id="MF_00268">
    <property type="entry name" value="RecA"/>
    <property type="match status" value="1"/>
</dbReference>
<dbReference type="InterPro" id="IPR003593">
    <property type="entry name" value="AAA+_ATPase"/>
</dbReference>
<dbReference type="InterPro" id="IPR013765">
    <property type="entry name" value="DNA_recomb/repair_RecA"/>
</dbReference>
<dbReference type="InterPro" id="IPR020584">
    <property type="entry name" value="DNA_recomb/repair_RecA_CS"/>
</dbReference>
<dbReference type="InterPro" id="IPR027417">
    <property type="entry name" value="P-loop_NTPase"/>
</dbReference>
<dbReference type="InterPro" id="IPR049261">
    <property type="entry name" value="RecA-like_C"/>
</dbReference>
<dbReference type="InterPro" id="IPR049428">
    <property type="entry name" value="RecA-like_N"/>
</dbReference>
<dbReference type="InterPro" id="IPR020588">
    <property type="entry name" value="RecA_ATP-bd"/>
</dbReference>
<dbReference type="InterPro" id="IPR023400">
    <property type="entry name" value="RecA_C_sf"/>
</dbReference>
<dbReference type="InterPro" id="IPR020587">
    <property type="entry name" value="RecA_monomer-monomer_interface"/>
</dbReference>
<dbReference type="NCBIfam" id="TIGR02012">
    <property type="entry name" value="tigrfam_recA"/>
    <property type="match status" value="1"/>
</dbReference>
<dbReference type="PANTHER" id="PTHR45900:SF1">
    <property type="entry name" value="MITOCHONDRIAL DNA REPAIR PROTEIN RECA HOMOLOG-RELATED"/>
    <property type="match status" value="1"/>
</dbReference>
<dbReference type="PANTHER" id="PTHR45900">
    <property type="entry name" value="RECA"/>
    <property type="match status" value="1"/>
</dbReference>
<dbReference type="Pfam" id="PF00154">
    <property type="entry name" value="RecA"/>
    <property type="match status" value="1"/>
</dbReference>
<dbReference type="Pfam" id="PF21096">
    <property type="entry name" value="RecA_C"/>
    <property type="match status" value="1"/>
</dbReference>
<dbReference type="PRINTS" id="PR00142">
    <property type="entry name" value="RECA"/>
</dbReference>
<dbReference type="SMART" id="SM00382">
    <property type="entry name" value="AAA"/>
    <property type="match status" value="1"/>
</dbReference>
<dbReference type="SUPFAM" id="SSF52540">
    <property type="entry name" value="P-loop containing nucleoside triphosphate hydrolases"/>
    <property type="match status" value="1"/>
</dbReference>
<dbReference type="SUPFAM" id="SSF54752">
    <property type="entry name" value="RecA protein, C-terminal domain"/>
    <property type="match status" value="1"/>
</dbReference>
<dbReference type="PROSITE" id="PS00321">
    <property type="entry name" value="RECA_1"/>
    <property type="match status" value="1"/>
</dbReference>
<dbReference type="PROSITE" id="PS50162">
    <property type="entry name" value="RECA_2"/>
    <property type="match status" value="1"/>
</dbReference>
<dbReference type="PROSITE" id="PS50163">
    <property type="entry name" value="RECA_3"/>
    <property type="match status" value="1"/>
</dbReference>
<organism>
    <name type="scientific">Prochlorococcus marinus (strain MIT 9515)</name>
    <dbReference type="NCBI Taxonomy" id="167542"/>
    <lineage>
        <taxon>Bacteria</taxon>
        <taxon>Bacillati</taxon>
        <taxon>Cyanobacteriota</taxon>
        <taxon>Cyanophyceae</taxon>
        <taxon>Synechococcales</taxon>
        <taxon>Prochlorococcaceae</taxon>
        <taxon>Prochlorococcus</taxon>
    </lineage>
</organism>
<sequence>MSFEERRKKDSKESSSKEKDKALNLVLGQIERNFGRGSIMRLGDASRMKVETISTGALTLDLALGGGYPKGRVVEVYGPESSGKTTLTLHAIAEVQKNGGIAAFVDAEHALDPVYAASLGVDVENLLVSQPDTGEMALEIVDQLIRSTAVDLVVVDSVAALTPRAEIEGEMGDHVIGSQARLMSQAMRKITGNIGKSGCTVIFLNQLRLKIGVTYGNPETTTGGNALKFYASVRLDIRRIQTLKRGTEEYGIRAKVKVAKNKVAPPFRIAEFDILFGKGISTTGCLLDLAEETNIIIRRGAWYSYEGENIGQGRDNTIIWLDQNLEIKKKVEGIVKSKLTEGTEVSSNSMKALNSNPENAVIANDIKTVA</sequence>
<feature type="chain" id="PRO_1000047962" description="Protein RecA">
    <location>
        <begin position="1"/>
        <end position="370"/>
    </location>
</feature>
<feature type="region of interest" description="Disordered" evidence="2">
    <location>
        <begin position="1"/>
        <end position="20"/>
    </location>
</feature>
<feature type="binding site" evidence="1">
    <location>
        <begin position="78"/>
        <end position="85"/>
    </location>
    <ligand>
        <name>ATP</name>
        <dbReference type="ChEBI" id="CHEBI:30616"/>
    </ligand>
</feature>
<name>RECA_PROM5</name>